<keyword id="KW-1185">Reference proteome</keyword>
<keyword id="KW-0964">Secreted</keyword>
<keyword id="KW-0713">Self-incompatibility</keyword>
<keyword id="KW-0732">Signal</keyword>
<comment type="subcellular location">
    <subcellularLocation>
        <location evidence="5">Secreted</location>
    </subcellularLocation>
</comment>
<comment type="tissue specificity">
    <text evidence="2">Restricted to floral tissues.</text>
</comment>
<comment type="similarity">
    <text evidence="4">Belongs to the plant self-incompatibility (S1) protein family.</text>
</comment>
<gene>
    <name evidence="3" type="primary">SPH1</name>
    <name evidence="6" type="ordered locus">At4g16295</name>
    <name evidence="4" type="ORF">FCAALL</name>
</gene>
<proteinExistence type="evidence at transcript level"/>
<accession>F4JLS0</accession>
<reference key="1">
    <citation type="journal article" date="1999" name="Nature">
        <title>Sequence and analysis of chromosome 4 of the plant Arabidopsis thaliana.</title>
        <authorList>
            <person name="Mayer K.F.X."/>
            <person name="Schueller C."/>
            <person name="Wambutt R."/>
            <person name="Murphy G."/>
            <person name="Volckaert G."/>
            <person name="Pohl T."/>
            <person name="Duesterhoeft A."/>
            <person name="Stiekema W."/>
            <person name="Entian K.-D."/>
            <person name="Terryn N."/>
            <person name="Harris B."/>
            <person name="Ansorge W."/>
            <person name="Brandt P."/>
            <person name="Grivell L.A."/>
            <person name="Rieger M."/>
            <person name="Weichselgartner M."/>
            <person name="de Simone V."/>
            <person name="Obermaier B."/>
            <person name="Mache R."/>
            <person name="Mueller M."/>
            <person name="Kreis M."/>
            <person name="Delseny M."/>
            <person name="Puigdomenech P."/>
            <person name="Watson M."/>
            <person name="Schmidtheini T."/>
            <person name="Reichert B."/>
            <person name="Portetelle D."/>
            <person name="Perez-Alonso M."/>
            <person name="Boutry M."/>
            <person name="Bancroft I."/>
            <person name="Vos P."/>
            <person name="Hoheisel J."/>
            <person name="Zimmermann W."/>
            <person name="Wedler H."/>
            <person name="Ridley P."/>
            <person name="Langham S.-A."/>
            <person name="McCullagh B."/>
            <person name="Bilham L."/>
            <person name="Robben J."/>
            <person name="van der Schueren J."/>
            <person name="Grymonprez B."/>
            <person name="Chuang Y.-J."/>
            <person name="Vandenbussche F."/>
            <person name="Braeken M."/>
            <person name="Weltjens I."/>
            <person name="Voet M."/>
            <person name="Bastiaens I."/>
            <person name="Aert R."/>
            <person name="Defoor E."/>
            <person name="Weitzenegger T."/>
            <person name="Bothe G."/>
            <person name="Ramsperger U."/>
            <person name="Hilbert H."/>
            <person name="Braun M."/>
            <person name="Holzer E."/>
            <person name="Brandt A."/>
            <person name="Peters S."/>
            <person name="van Staveren M."/>
            <person name="Dirkse W."/>
            <person name="Mooijman P."/>
            <person name="Klein Lankhorst R."/>
            <person name="Rose M."/>
            <person name="Hauf J."/>
            <person name="Koetter P."/>
            <person name="Berneiser S."/>
            <person name="Hempel S."/>
            <person name="Feldpausch M."/>
            <person name="Lamberth S."/>
            <person name="Van den Daele H."/>
            <person name="De Keyser A."/>
            <person name="Buysshaert C."/>
            <person name="Gielen J."/>
            <person name="Villarroel R."/>
            <person name="De Clercq R."/>
            <person name="van Montagu M."/>
            <person name="Rogers J."/>
            <person name="Cronin A."/>
            <person name="Quail M.A."/>
            <person name="Bray-Allen S."/>
            <person name="Clark L."/>
            <person name="Doggett J."/>
            <person name="Hall S."/>
            <person name="Kay M."/>
            <person name="Lennard N."/>
            <person name="McLay K."/>
            <person name="Mayes R."/>
            <person name="Pettett A."/>
            <person name="Rajandream M.A."/>
            <person name="Lyne M."/>
            <person name="Benes V."/>
            <person name="Rechmann S."/>
            <person name="Borkova D."/>
            <person name="Bloecker H."/>
            <person name="Scharfe M."/>
            <person name="Grimm M."/>
            <person name="Loehnert T.-H."/>
            <person name="Dose S."/>
            <person name="de Haan M."/>
            <person name="Maarse A.C."/>
            <person name="Schaefer M."/>
            <person name="Mueller-Auer S."/>
            <person name="Gabel C."/>
            <person name="Fuchs M."/>
            <person name="Fartmann B."/>
            <person name="Granderath K."/>
            <person name="Dauner D."/>
            <person name="Herzl A."/>
            <person name="Neumann S."/>
            <person name="Argiriou A."/>
            <person name="Vitale D."/>
            <person name="Liguori R."/>
            <person name="Piravandi E."/>
            <person name="Massenet O."/>
            <person name="Quigley F."/>
            <person name="Clabauld G."/>
            <person name="Muendlein A."/>
            <person name="Felber R."/>
            <person name="Schnabl S."/>
            <person name="Hiller R."/>
            <person name="Schmidt W."/>
            <person name="Lecharny A."/>
            <person name="Aubourg S."/>
            <person name="Chefdor F."/>
            <person name="Cooke R."/>
            <person name="Berger C."/>
            <person name="Monfort A."/>
            <person name="Casacuberta E."/>
            <person name="Gibbons T."/>
            <person name="Weber N."/>
            <person name="Vandenbol M."/>
            <person name="Bargues M."/>
            <person name="Terol J."/>
            <person name="Torres A."/>
            <person name="Perez-Perez A."/>
            <person name="Purnelle B."/>
            <person name="Bent E."/>
            <person name="Johnson S."/>
            <person name="Tacon D."/>
            <person name="Jesse T."/>
            <person name="Heijnen L."/>
            <person name="Schwarz S."/>
            <person name="Scholler P."/>
            <person name="Heber S."/>
            <person name="Francs P."/>
            <person name="Bielke C."/>
            <person name="Frishman D."/>
            <person name="Haase D."/>
            <person name="Lemcke K."/>
            <person name="Mewes H.-W."/>
            <person name="Stocker S."/>
            <person name="Zaccaria P."/>
            <person name="Bevan M."/>
            <person name="Wilson R.K."/>
            <person name="de la Bastide M."/>
            <person name="Habermann K."/>
            <person name="Parnell L."/>
            <person name="Dedhia N."/>
            <person name="Gnoj L."/>
            <person name="Schutz K."/>
            <person name="Huang E."/>
            <person name="Spiegel L."/>
            <person name="Sekhon M."/>
            <person name="Murray J."/>
            <person name="Sheet P."/>
            <person name="Cordes M."/>
            <person name="Abu-Threideh J."/>
            <person name="Stoneking T."/>
            <person name="Kalicki J."/>
            <person name="Graves T."/>
            <person name="Harmon G."/>
            <person name="Edwards J."/>
            <person name="Latreille P."/>
            <person name="Courtney L."/>
            <person name="Cloud J."/>
            <person name="Abbott A."/>
            <person name="Scott K."/>
            <person name="Johnson D."/>
            <person name="Minx P."/>
            <person name="Bentley D."/>
            <person name="Fulton B."/>
            <person name="Miller N."/>
            <person name="Greco T."/>
            <person name="Kemp K."/>
            <person name="Kramer J."/>
            <person name="Fulton L."/>
            <person name="Mardis E."/>
            <person name="Dante M."/>
            <person name="Pepin K."/>
            <person name="Hillier L.W."/>
            <person name="Nelson J."/>
            <person name="Spieth J."/>
            <person name="Ryan E."/>
            <person name="Andrews S."/>
            <person name="Geisel C."/>
            <person name="Layman D."/>
            <person name="Du H."/>
            <person name="Ali J."/>
            <person name="Berghoff A."/>
            <person name="Jones K."/>
            <person name="Drone K."/>
            <person name="Cotton M."/>
            <person name="Joshu C."/>
            <person name="Antonoiu B."/>
            <person name="Zidanic M."/>
            <person name="Strong C."/>
            <person name="Sun H."/>
            <person name="Lamar B."/>
            <person name="Yordan C."/>
            <person name="Ma P."/>
            <person name="Zhong J."/>
            <person name="Preston R."/>
            <person name="Vil D."/>
            <person name="Shekher M."/>
            <person name="Matero A."/>
            <person name="Shah R."/>
            <person name="Swaby I.K."/>
            <person name="O'Shaughnessy A."/>
            <person name="Rodriguez M."/>
            <person name="Hoffman J."/>
            <person name="Till S."/>
            <person name="Granat S."/>
            <person name="Shohdy N."/>
            <person name="Hasegawa A."/>
            <person name="Hameed A."/>
            <person name="Lodhi M."/>
            <person name="Johnson A."/>
            <person name="Chen E."/>
            <person name="Marra M.A."/>
            <person name="Martienssen R."/>
            <person name="McCombie W.R."/>
        </authorList>
    </citation>
    <scope>NUCLEOTIDE SEQUENCE [LARGE SCALE GENOMIC DNA]</scope>
    <source>
        <strain>cv. Columbia</strain>
    </source>
</reference>
<reference key="2">
    <citation type="journal article" date="2017" name="Plant J.">
        <title>Araport11: a complete reannotation of the Arabidopsis thaliana reference genome.</title>
        <authorList>
            <person name="Cheng C.Y."/>
            <person name="Krishnakumar V."/>
            <person name="Chan A.P."/>
            <person name="Thibaud-Nissen F."/>
            <person name="Schobel S."/>
            <person name="Town C.D."/>
        </authorList>
    </citation>
    <scope>GENOME REANNOTATION</scope>
    <source>
        <strain>cv. Columbia</strain>
    </source>
</reference>
<reference key="3">
    <citation type="journal article" date="1999" name="Plant Mol. Biol.">
        <title>Analysis of Arabidopsis genome sequence reveals a large new gene family in plants.</title>
        <authorList>
            <person name="Ride J.P."/>
            <person name="Davies E.M."/>
            <person name="Franklin F.C.H."/>
            <person name="Marshall D.F."/>
        </authorList>
    </citation>
    <scope>TISSUE SPECIFICITY</scope>
    <scope>GENE FAMILY</scope>
    <scope>NOMENCLATURE</scope>
    <source>
        <strain>cv. Columbia</strain>
    </source>
</reference>
<protein>
    <recommendedName>
        <fullName evidence="3">S-protein homolog 1</fullName>
    </recommendedName>
</protein>
<evidence type="ECO:0000255" key="1"/>
<evidence type="ECO:0000269" key="2">
    <source>
    </source>
</evidence>
<evidence type="ECO:0000303" key="3">
    <source>
    </source>
</evidence>
<evidence type="ECO:0000305" key="4"/>
<evidence type="ECO:0000305" key="5">
    <source>
    </source>
</evidence>
<evidence type="ECO:0000312" key="6">
    <source>
        <dbReference type="Araport" id="AT4G16295"/>
    </source>
</evidence>
<dbReference type="EMBL" id="AL117321">
    <property type="status" value="NOT_ANNOTATED_CDS"/>
    <property type="molecule type" value="Genomic_DNA"/>
</dbReference>
<dbReference type="EMBL" id="CP002687">
    <property type="protein sequence ID" value="AEE83729.1"/>
    <property type="molecule type" value="Genomic_DNA"/>
</dbReference>
<dbReference type="RefSeq" id="NP_680714.1">
    <property type="nucleotide sequence ID" value="NM_148348.1"/>
</dbReference>
<dbReference type="SMR" id="F4JLS0"/>
<dbReference type="STRING" id="3702.F4JLS0"/>
<dbReference type="PaxDb" id="3702-AT4G16295.1"/>
<dbReference type="EnsemblPlants" id="AT4G16295.1">
    <property type="protein sequence ID" value="AT4G16295.1"/>
    <property type="gene ID" value="AT4G16295"/>
</dbReference>
<dbReference type="GeneID" id="827324"/>
<dbReference type="Gramene" id="AT4G16295.1">
    <property type="protein sequence ID" value="AT4G16295.1"/>
    <property type="gene ID" value="AT4G16295"/>
</dbReference>
<dbReference type="KEGG" id="ath:AT4G16295"/>
<dbReference type="Araport" id="AT4G16295"/>
<dbReference type="TAIR" id="AT4G16295">
    <property type="gene designation" value="SPH1"/>
</dbReference>
<dbReference type="eggNOG" id="ENOG502SQIK">
    <property type="taxonomic scope" value="Eukaryota"/>
</dbReference>
<dbReference type="HOGENOM" id="CLU_125658_1_1_1"/>
<dbReference type="InParanoid" id="F4JLS0"/>
<dbReference type="OMA" id="NDNCIWI"/>
<dbReference type="PhylomeDB" id="F4JLS0"/>
<dbReference type="PRO" id="PR:F4JLS0"/>
<dbReference type="Proteomes" id="UP000006548">
    <property type="component" value="Chromosome 4"/>
</dbReference>
<dbReference type="GO" id="GO:0005576">
    <property type="term" value="C:extracellular region"/>
    <property type="evidence" value="ECO:0007669"/>
    <property type="project" value="UniProtKB-SubCell"/>
</dbReference>
<dbReference type="GO" id="GO:0009875">
    <property type="term" value="P:pollen-pistil interaction"/>
    <property type="evidence" value="ECO:0000250"/>
    <property type="project" value="TAIR"/>
</dbReference>
<dbReference type="GO" id="GO:0060320">
    <property type="term" value="P:rejection of self pollen"/>
    <property type="evidence" value="ECO:0007669"/>
    <property type="project" value="UniProtKB-KW"/>
</dbReference>
<dbReference type="InterPro" id="IPR010264">
    <property type="entry name" value="Self-incomp_S1"/>
</dbReference>
<dbReference type="PANTHER" id="PTHR31232">
    <property type="match status" value="1"/>
</dbReference>
<dbReference type="PANTHER" id="PTHR31232:SF156">
    <property type="entry name" value="PLANT SELF-INCOMPATIBILITY PROTEIN S1 FAMILY-RELATED"/>
    <property type="match status" value="1"/>
</dbReference>
<dbReference type="Pfam" id="PF05938">
    <property type="entry name" value="Self-incomp_S1"/>
    <property type="match status" value="1"/>
</dbReference>
<organism>
    <name type="scientific">Arabidopsis thaliana</name>
    <name type="common">Mouse-ear cress</name>
    <dbReference type="NCBI Taxonomy" id="3702"/>
    <lineage>
        <taxon>Eukaryota</taxon>
        <taxon>Viridiplantae</taxon>
        <taxon>Streptophyta</taxon>
        <taxon>Embryophyta</taxon>
        <taxon>Tracheophyta</taxon>
        <taxon>Spermatophyta</taxon>
        <taxon>Magnoliopsida</taxon>
        <taxon>eudicotyledons</taxon>
        <taxon>Gunneridae</taxon>
        <taxon>Pentapetalae</taxon>
        <taxon>rosids</taxon>
        <taxon>malvids</taxon>
        <taxon>Brassicales</taxon>
        <taxon>Brassicaceae</taxon>
        <taxon>Camelineae</taxon>
        <taxon>Arabidopsis</taxon>
    </lineage>
</organism>
<sequence>MNCIKQFLLAICFSLALTCQDHVLVGGTTTRDIIVPKISEWQVTVVNGLTTGETLFIHCKSKEDDLGEINLKFRNRFSWNFGENMLHSTFFWCYMNKDNGHMNVNVFWDDVILFHRCGWKNCIWTAKTDGLYLWNSASGEDVLSRKWEVGW</sequence>
<name>SPH1_ARATH</name>
<feature type="signal peptide" evidence="1">
    <location>
        <begin position="1"/>
        <end position="18"/>
    </location>
</feature>
<feature type="chain" id="PRO_5003309781" description="S-protein homolog 1">
    <location>
        <begin position="19"/>
        <end position="151"/>
    </location>
</feature>